<feature type="chain" id="PRO_0000350031" description="Probable dual-specificity RNA methyltransferase RlmN">
    <location>
        <begin position="1"/>
        <end position="362"/>
    </location>
</feature>
<feature type="domain" description="Radical SAM core" evidence="2">
    <location>
        <begin position="111"/>
        <end position="344"/>
    </location>
</feature>
<feature type="active site" description="Proton acceptor" evidence="1">
    <location>
        <position position="105"/>
    </location>
</feature>
<feature type="active site" description="S-methylcysteine intermediate" evidence="1">
    <location>
        <position position="349"/>
    </location>
</feature>
<feature type="binding site" evidence="1">
    <location>
        <position position="125"/>
    </location>
    <ligand>
        <name>[4Fe-4S] cluster</name>
        <dbReference type="ChEBI" id="CHEBI:49883"/>
        <note>4Fe-4S-S-AdoMet</note>
    </ligand>
</feature>
<feature type="binding site" evidence="1">
    <location>
        <position position="129"/>
    </location>
    <ligand>
        <name>[4Fe-4S] cluster</name>
        <dbReference type="ChEBI" id="CHEBI:49883"/>
        <note>4Fe-4S-S-AdoMet</note>
    </ligand>
</feature>
<feature type="binding site" evidence="1">
    <location>
        <position position="132"/>
    </location>
    <ligand>
        <name>[4Fe-4S] cluster</name>
        <dbReference type="ChEBI" id="CHEBI:49883"/>
        <note>4Fe-4S-S-AdoMet</note>
    </ligand>
</feature>
<feature type="binding site" evidence="1">
    <location>
        <begin position="175"/>
        <end position="176"/>
    </location>
    <ligand>
        <name>S-adenosyl-L-methionine</name>
        <dbReference type="ChEBI" id="CHEBI:59789"/>
    </ligand>
</feature>
<feature type="binding site" evidence="1">
    <location>
        <position position="207"/>
    </location>
    <ligand>
        <name>S-adenosyl-L-methionine</name>
        <dbReference type="ChEBI" id="CHEBI:59789"/>
    </ligand>
</feature>
<feature type="binding site" evidence="1">
    <location>
        <begin position="230"/>
        <end position="232"/>
    </location>
    <ligand>
        <name>S-adenosyl-L-methionine</name>
        <dbReference type="ChEBI" id="CHEBI:59789"/>
    </ligand>
</feature>
<feature type="binding site" evidence="1">
    <location>
        <position position="306"/>
    </location>
    <ligand>
        <name>S-adenosyl-L-methionine</name>
        <dbReference type="ChEBI" id="CHEBI:59789"/>
    </ligand>
</feature>
<feature type="disulfide bond" description="(transient)" evidence="1">
    <location>
        <begin position="118"/>
        <end position="349"/>
    </location>
</feature>
<gene>
    <name evidence="1" type="primary">rlmN</name>
    <name type="ordered locus">Bcer98_2516</name>
</gene>
<keyword id="KW-0004">4Fe-4S</keyword>
<keyword id="KW-0963">Cytoplasm</keyword>
<keyword id="KW-1015">Disulfide bond</keyword>
<keyword id="KW-0408">Iron</keyword>
<keyword id="KW-0411">Iron-sulfur</keyword>
<keyword id="KW-0479">Metal-binding</keyword>
<keyword id="KW-0489">Methyltransferase</keyword>
<keyword id="KW-0698">rRNA processing</keyword>
<keyword id="KW-0949">S-adenosyl-L-methionine</keyword>
<keyword id="KW-0808">Transferase</keyword>
<keyword id="KW-0819">tRNA processing</keyword>
<name>RLMN_BACCN</name>
<organism>
    <name type="scientific">Bacillus cytotoxicus (strain DSM 22905 / CIP 110041 / 391-98 / NVH 391-98)</name>
    <dbReference type="NCBI Taxonomy" id="315749"/>
    <lineage>
        <taxon>Bacteria</taxon>
        <taxon>Bacillati</taxon>
        <taxon>Bacillota</taxon>
        <taxon>Bacilli</taxon>
        <taxon>Bacillales</taxon>
        <taxon>Bacillaceae</taxon>
        <taxon>Bacillus</taxon>
        <taxon>Bacillus cereus group</taxon>
    </lineage>
</organism>
<comment type="function">
    <text evidence="1">Specifically methylates position 2 of adenine 2503 in 23S rRNA and position 2 of adenine 37 in tRNAs.</text>
</comment>
<comment type="catalytic activity">
    <reaction evidence="1">
        <text>adenosine(2503) in 23S rRNA + 2 reduced [2Fe-2S]-[ferredoxin] + 2 S-adenosyl-L-methionine = 2-methyladenosine(2503) in 23S rRNA + 5'-deoxyadenosine + L-methionine + 2 oxidized [2Fe-2S]-[ferredoxin] + S-adenosyl-L-homocysteine</text>
        <dbReference type="Rhea" id="RHEA:42916"/>
        <dbReference type="Rhea" id="RHEA-COMP:10000"/>
        <dbReference type="Rhea" id="RHEA-COMP:10001"/>
        <dbReference type="Rhea" id="RHEA-COMP:10152"/>
        <dbReference type="Rhea" id="RHEA-COMP:10282"/>
        <dbReference type="ChEBI" id="CHEBI:17319"/>
        <dbReference type="ChEBI" id="CHEBI:33737"/>
        <dbReference type="ChEBI" id="CHEBI:33738"/>
        <dbReference type="ChEBI" id="CHEBI:57844"/>
        <dbReference type="ChEBI" id="CHEBI:57856"/>
        <dbReference type="ChEBI" id="CHEBI:59789"/>
        <dbReference type="ChEBI" id="CHEBI:74411"/>
        <dbReference type="ChEBI" id="CHEBI:74497"/>
        <dbReference type="EC" id="2.1.1.192"/>
    </reaction>
</comment>
<comment type="catalytic activity">
    <reaction evidence="1">
        <text>adenosine(37) in tRNA + 2 reduced [2Fe-2S]-[ferredoxin] + 2 S-adenosyl-L-methionine = 2-methyladenosine(37) in tRNA + 5'-deoxyadenosine + L-methionine + 2 oxidized [2Fe-2S]-[ferredoxin] + S-adenosyl-L-homocysteine</text>
        <dbReference type="Rhea" id="RHEA:43332"/>
        <dbReference type="Rhea" id="RHEA-COMP:10000"/>
        <dbReference type="Rhea" id="RHEA-COMP:10001"/>
        <dbReference type="Rhea" id="RHEA-COMP:10162"/>
        <dbReference type="Rhea" id="RHEA-COMP:10485"/>
        <dbReference type="ChEBI" id="CHEBI:17319"/>
        <dbReference type="ChEBI" id="CHEBI:33737"/>
        <dbReference type="ChEBI" id="CHEBI:33738"/>
        <dbReference type="ChEBI" id="CHEBI:57844"/>
        <dbReference type="ChEBI" id="CHEBI:57856"/>
        <dbReference type="ChEBI" id="CHEBI:59789"/>
        <dbReference type="ChEBI" id="CHEBI:74411"/>
        <dbReference type="ChEBI" id="CHEBI:74497"/>
        <dbReference type="EC" id="2.1.1.192"/>
    </reaction>
</comment>
<comment type="cofactor">
    <cofactor evidence="1">
        <name>[4Fe-4S] cluster</name>
        <dbReference type="ChEBI" id="CHEBI:49883"/>
    </cofactor>
    <text evidence="1">Binds 1 [4Fe-4S] cluster. The cluster is coordinated with 3 cysteines and an exchangeable S-adenosyl-L-methionine.</text>
</comment>
<comment type="subcellular location">
    <subcellularLocation>
        <location evidence="1">Cytoplasm</location>
    </subcellularLocation>
</comment>
<comment type="miscellaneous">
    <text evidence="1">Reaction proceeds by a ping-pong mechanism involving intermediate methylation of a conserved cysteine residue.</text>
</comment>
<comment type="similarity">
    <text evidence="1">Belongs to the radical SAM superfamily. RlmN family.</text>
</comment>
<reference key="1">
    <citation type="journal article" date="2008" name="Chem. Biol. Interact.">
        <title>Extending the Bacillus cereus group genomics to putative food-borne pathogens of different toxicity.</title>
        <authorList>
            <person name="Lapidus A."/>
            <person name="Goltsman E."/>
            <person name="Auger S."/>
            <person name="Galleron N."/>
            <person name="Segurens B."/>
            <person name="Dossat C."/>
            <person name="Land M.L."/>
            <person name="Broussolle V."/>
            <person name="Brillard J."/>
            <person name="Guinebretiere M.-H."/>
            <person name="Sanchis V."/>
            <person name="Nguen-the C."/>
            <person name="Lereclus D."/>
            <person name="Richardson P."/>
            <person name="Wincker P."/>
            <person name="Weissenbach J."/>
            <person name="Ehrlich S.D."/>
            <person name="Sorokin A."/>
        </authorList>
    </citation>
    <scope>NUCLEOTIDE SEQUENCE [LARGE SCALE GENOMIC DNA]</scope>
    <source>
        <strain>DSM 22905 / CIP 110041 / 391-98 / NVH 391-98</strain>
    </source>
</reference>
<dbReference type="EC" id="2.1.1.192" evidence="1"/>
<dbReference type="EMBL" id="CP000764">
    <property type="protein sequence ID" value="ABS22752.1"/>
    <property type="molecule type" value="Genomic_DNA"/>
</dbReference>
<dbReference type="RefSeq" id="WP_012094959.1">
    <property type="nucleotide sequence ID" value="NC_009674.1"/>
</dbReference>
<dbReference type="SMR" id="A7GRJ4"/>
<dbReference type="STRING" id="315749.Bcer98_2516"/>
<dbReference type="GeneID" id="33897772"/>
<dbReference type="KEGG" id="bcy:Bcer98_2516"/>
<dbReference type="eggNOG" id="COG0820">
    <property type="taxonomic scope" value="Bacteria"/>
</dbReference>
<dbReference type="HOGENOM" id="CLU_029101_0_1_9"/>
<dbReference type="OrthoDB" id="9793973at2"/>
<dbReference type="Proteomes" id="UP000002300">
    <property type="component" value="Chromosome"/>
</dbReference>
<dbReference type="GO" id="GO:0005737">
    <property type="term" value="C:cytoplasm"/>
    <property type="evidence" value="ECO:0007669"/>
    <property type="project" value="UniProtKB-SubCell"/>
</dbReference>
<dbReference type="GO" id="GO:0051539">
    <property type="term" value="F:4 iron, 4 sulfur cluster binding"/>
    <property type="evidence" value="ECO:0007669"/>
    <property type="project" value="UniProtKB-UniRule"/>
</dbReference>
<dbReference type="GO" id="GO:0046872">
    <property type="term" value="F:metal ion binding"/>
    <property type="evidence" value="ECO:0007669"/>
    <property type="project" value="UniProtKB-KW"/>
</dbReference>
<dbReference type="GO" id="GO:0070040">
    <property type="term" value="F:rRNA (adenine(2503)-C2-)-methyltransferase activity"/>
    <property type="evidence" value="ECO:0007669"/>
    <property type="project" value="UniProtKB-UniRule"/>
</dbReference>
<dbReference type="GO" id="GO:0019843">
    <property type="term" value="F:rRNA binding"/>
    <property type="evidence" value="ECO:0007669"/>
    <property type="project" value="UniProtKB-UniRule"/>
</dbReference>
<dbReference type="GO" id="GO:0002935">
    <property type="term" value="F:tRNA (adenine(37)-C2)-methyltransferase activity"/>
    <property type="evidence" value="ECO:0007669"/>
    <property type="project" value="UniProtKB-UniRule"/>
</dbReference>
<dbReference type="GO" id="GO:0000049">
    <property type="term" value="F:tRNA binding"/>
    <property type="evidence" value="ECO:0007669"/>
    <property type="project" value="UniProtKB-UniRule"/>
</dbReference>
<dbReference type="GO" id="GO:0070475">
    <property type="term" value="P:rRNA base methylation"/>
    <property type="evidence" value="ECO:0007669"/>
    <property type="project" value="UniProtKB-UniRule"/>
</dbReference>
<dbReference type="GO" id="GO:0030488">
    <property type="term" value="P:tRNA methylation"/>
    <property type="evidence" value="ECO:0007669"/>
    <property type="project" value="UniProtKB-UniRule"/>
</dbReference>
<dbReference type="CDD" id="cd01335">
    <property type="entry name" value="Radical_SAM"/>
    <property type="match status" value="1"/>
</dbReference>
<dbReference type="FunFam" id="1.10.150.530:FF:000002">
    <property type="entry name" value="Probable dual-specificity RNA methyltransferase RlmN"/>
    <property type="match status" value="1"/>
</dbReference>
<dbReference type="FunFam" id="3.20.20.70:FF:000014">
    <property type="entry name" value="Probable dual-specificity RNA methyltransferase RlmN"/>
    <property type="match status" value="1"/>
</dbReference>
<dbReference type="Gene3D" id="1.10.150.530">
    <property type="match status" value="1"/>
</dbReference>
<dbReference type="Gene3D" id="3.20.20.70">
    <property type="entry name" value="Aldolase class I"/>
    <property type="match status" value="1"/>
</dbReference>
<dbReference type="HAMAP" id="MF_01849">
    <property type="entry name" value="RNA_methyltr_RlmN"/>
    <property type="match status" value="1"/>
</dbReference>
<dbReference type="InterPro" id="IPR013785">
    <property type="entry name" value="Aldolase_TIM"/>
</dbReference>
<dbReference type="InterPro" id="IPR040072">
    <property type="entry name" value="Methyltransferase_A"/>
</dbReference>
<dbReference type="InterPro" id="IPR048641">
    <property type="entry name" value="RlmN_N"/>
</dbReference>
<dbReference type="InterPro" id="IPR027492">
    <property type="entry name" value="RNA_MTrfase_RlmN"/>
</dbReference>
<dbReference type="InterPro" id="IPR004383">
    <property type="entry name" value="rRNA_lsu_MTrfase_RlmN/Cfr"/>
</dbReference>
<dbReference type="InterPro" id="IPR007197">
    <property type="entry name" value="rSAM"/>
</dbReference>
<dbReference type="NCBIfam" id="TIGR00048">
    <property type="entry name" value="rRNA_mod_RlmN"/>
    <property type="match status" value="1"/>
</dbReference>
<dbReference type="PANTHER" id="PTHR30544">
    <property type="entry name" value="23S RRNA METHYLTRANSFERASE"/>
    <property type="match status" value="1"/>
</dbReference>
<dbReference type="PANTHER" id="PTHR30544:SF5">
    <property type="entry name" value="RADICAL SAM CORE DOMAIN-CONTAINING PROTEIN"/>
    <property type="match status" value="1"/>
</dbReference>
<dbReference type="Pfam" id="PF04055">
    <property type="entry name" value="Radical_SAM"/>
    <property type="match status" value="1"/>
</dbReference>
<dbReference type="Pfam" id="PF21016">
    <property type="entry name" value="RlmN_N"/>
    <property type="match status" value="1"/>
</dbReference>
<dbReference type="PIRSF" id="PIRSF006004">
    <property type="entry name" value="CHP00048"/>
    <property type="match status" value="1"/>
</dbReference>
<dbReference type="SFLD" id="SFLDF00275">
    <property type="entry name" value="adenosine_C2_methyltransferase"/>
    <property type="match status" value="1"/>
</dbReference>
<dbReference type="SFLD" id="SFLDG01062">
    <property type="entry name" value="methyltransferase_(Class_A)"/>
    <property type="match status" value="1"/>
</dbReference>
<dbReference type="SUPFAM" id="SSF102114">
    <property type="entry name" value="Radical SAM enzymes"/>
    <property type="match status" value="1"/>
</dbReference>
<dbReference type="PROSITE" id="PS51918">
    <property type="entry name" value="RADICAL_SAM"/>
    <property type="match status" value="1"/>
</dbReference>
<evidence type="ECO:0000255" key="1">
    <source>
        <dbReference type="HAMAP-Rule" id="MF_01849"/>
    </source>
</evidence>
<evidence type="ECO:0000255" key="2">
    <source>
        <dbReference type="PROSITE-ProRule" id="PRU01266"/>
    </source>
</evidence>
<accession>A7GRJ4</accession>
<protein>
    <recommendedName>
        <fullName evidence="1">Probable dual-specificity RNA methyltransferase RlmN</fullName>
        <ecNumber evidence="1">2.1.1.192</ecNumber>
    </recommendedName>
    <alternativeName>
        <fullName evidence="1">23S rRNA (adenine(2503)-C(2))-methyltransferase</fullName>
    </alternativeName>
    <alternativeName>
        <fullName evidence="1">23S rRNA m2A2503 methyltransferase</fullName>
    </alternativeName>
    <alternativeName>
        <fullName evidence="1">Ribosomal RNA large subunit methyltransferase N</fullName>
    </alternativeName>
    <alternativeName>
        <fullName evidence="1">tRNA (adenine(37)-C(2))-methyltransferase</fullName>
    </alternativeName>
    <alternativeName>
        <fullName evidence="1">tRNA m2A37 methyltransferase</fullName>
    </alternativeName>
</protein>
<sequence>METTTRKQKKALETKKPSIYSLQLHEMQEWLKEQGEPKFRAGQIFDWLYKKRVKNYEDMTNLSKGLREKLSNSFDITTLNTLVKQTSSDGTIKFLFQLYDGYSIETVLMRHEYGNSICVTTQVGCRIGCTFCASTLGGLKRNLEAGEIVAQVVEVQRALDETNERVSSLVVMGIGEPFDNYDHLMSFLRIVNHEKGINIGARHMTVSTSGIIPKIYKFAEEDLQINFAISLHAPNTELRSKLMPINRAYKLPDLMEAIKYYINRTGRRVTFEYGLFGGENDQVEHAEELAQLLKGVKCHVNLIPVNYVPERDYVRTPREQIFLFEKTLKNRGVNVTIRREQGHDIDAACGQLRAKERKEETR</sequence>
<proteinExistence type="inferred from homology"/>